<sequence length="639" mass="71200">MDRVLLRWISLFWLTAMVEGLQVTVPDKKKVAMLFQPTVLRCHFSTSSHQPAVVQWKFKSYCQDRMGESLGMSSTRAQSLSKRNLEWDPYLDCLDSRRTVRVVASKQGSTVTLGDFYRGREITIVHDADLQIGKLMWGDSGLYYCIITTPDDLEGKNEDSVELLVLGRTGLLADLLPSFAVEIMPEWVFVGLVLLGVFLFFVLVGICWCQCCPHSCCCYVRCPCCPDSCCCPQALYEAGKAAKAGYPPSVSGVPGPYSIPSVPLGGAPSSGMLMDKPHPPPLAPSDSTGGSHSVRKGYRIQADKERDSMKVLYYVEKELAQFDPARRMRGRYNNTISELSSLHEEDSNFRQSFHQMRSKQFPVSGDLESNPDYWSGVMGGSSGASRGPSAMEYNKEDRESFRHSQPRSKSEMLSRKNFATGVPAVSMDELAAFADSYGQRPRRADGNSHEARGGSRFERSESRAHSGFYQDDSLEEYYGQRSRSREPLTDADRGWAFSPARRRPAEDAHLPRLVSRTPGTAPKYDHSYLGSARERQARPEGASRGGSLETPSKRSAQLGPRSASYYAWSPPGTYKAGSSQDDQEDASDDALPPYSELELTRGPSYRGRDLPYHSNSEKKRKKEPAKKTNDFPTRMSLVV</sequence>
<proteinExistence type="evidence at protein level"/>
<comment type="function">
    <text evidence="2 5">May be involved in ER stress pathways with effects on lipid homeostasis and insulin secretion. With ILDR1 and LSR, involved in the maintain of the epithelial barrier function through the recruitment of MARVELD2/tricellulin to tricellular tight junctions (By similarity). Also functions as a B7-like protein family member expressed on immune cells and inflamed tissue and with T-cell inhibitory activity (PubMed:29431694). In the inner ear, may regulate alternative pre-mRNA splicing via binding to TRA2A, TRA2B and SRSF1 (By similarity).</text>
</comment>
<comment type="subunit">
    <text evidence="2">Interacts with MARVELD2 and OCLN. Interacts with P4HB AND HSPA5; the interaction with HSPA5 stabilizes ILDR2 expression. Interacts (via C-terminus) with TRA2A, TRA2B and SRSF1.</text>
</comment>
<comment type="subcellular location">
    <subcellularLocation>
        <location evidence="2">Endoplasmic reticulum membrane</location>
        <topology evidence="2">Single-pass type I membrane protein</topology>
    </subcellularLocation>
    <subcellularLocation>
        <location evidence="2">Cell junction</location>
        <location evidence="2">Tight junction</location>
    </subcellularLocation>
    <subcellularLocation>
        <location evidence="2">Nucleus</location>
    </subcellularLocation>
</comment>
<comment type="tissue specificity">
    <text evidence="5">Expressed in testis, brain, pituitary, colon, heart, nerves, prostate, esophagus, lung liver and small intestine (PubMed:29431694). Highly expressed in macrophages, also expressed in monocytes and at low levels in NK and NKT cells (at protein level) (PubMed:29431694).</text>
</comment>
<comment type="developmental stage">
    <text evidence="5">Expression is up-regulated following differentiation of monocytes to macrophages.</text>
</comment>
<comment type="similarity">
    <text evidence="6">Belongs to the immunoglobulin superfamily. LISCH7 family.</text>
</comment>
<evidence type="ECO:0000250" key="1"/>
<evidence type="ECO:0000250" key="2">
    <source>
        <dbReference type="UniProtKB" id="B5TVM2"/>
    </source>
</evidence>
<evidence type="ECO:0000255" key="3"/>
<evidence type="ECO:0000256" key="4">
    <source>
        <dbReference type="SAM" id="MobiDB-lite"/>
    </source>
</evidence>
<evidence type="ECO:0000269" key="5">
    <source>
    </source>
</evidence>
<evidence type="ECO:0000305" key="6"/>
<evidence type="ECO:0000312" key="7">
    <source>
        <dbReference type="HGNC" id="HGNC:18131"/>
    </source>
</evidence>
<name>ILDR2_HUMAN</name>
<gene>
    <name evidence="7" type="primary">ILDR2</name>
    <name type="synonym">C1orf32</name>
</gene>
<organism>
    <name type="scientific">Homo sapiens</name>
    <name type="common">Human</name>
    <dbReference type="NCBI Taxonomy" id="9606"/>
    <lineage>
        <taxon>Eukaryota</taxon>
        <taxon>Metazoa</taxon>
        <taxon>Chordata</taxon>
        <taxon>Craniata</taxon>
        <taxon>Vertebrata</taxon>
        <taxon>Euteleostomi</taxon>
        <taxon>Mammalia</taxon>
        <taxon>Eutheria</taxon>
        <taxon>Euarchontoglires</taxon>
        <taxon>Primates</taxon>
        <taxon>Haplorrhini</taxon>
        <taxon>Catarrhini</taxon>
        <taxon>Hominidae</taxon>
        <taxon>Homo</taxon>
    </lineage>
</organism>
<feature type="signal peptide" evidence="3">
    <location>
        <begin position="1"/>
        <end position="20"/>
    </location>
</feature>
<feature type="chain" id="PRO_0000278607" description="Immunoglobulin-like domain-containing receptor 2">
    <location>
        <begin position="21"/>
        <end position="639"/>
    </location>
</feature>
<feature type="topological domain" description="Lumenal" evidence="3">
    <location>
        <begin position="21"/>
        <end position="186"/>
    </location>
</feature>
<feature type="transmembrane region" description="Helical" evidence="3">
    <location>
        <begin position="187"/>
        <end position="207"/>
    </location>
</feature>
<feature type="topological domain" description="Cytoplasmic" evidence="3">
    <location>
        <begin position="208"/>
        <end position="639"/>
    </location>
</feature>
<feature type="domain" description="Ig-like V-type">
    <location>
        <begin position="21"/>
        <end position="162"/>
    </location>
</feature>
<feature type="region of interest" description="Disordered" evidence="4">
    <location>
        <begin position="273"/>
        <end position="295"/>
    </location>
</feature>
<feature type="region of interest" description="Disordered" evidence="4">
    <location>
        <begin position="374"/>
        <end position="415"/>
    </location>
</feature>
<feature type="region of interest" description="Disordered" evidence="4">
    <location>
        <begin position="437"/>
        <end position="639"/>
    </location>
</feature>
<feature type="compositionally biased region" description="Basic and acidic residues" evidence="4">
    <location>
        <begin position="393"/>
        <end position="414"/>
    </location>
</feature>
<feature type="compositionally biased region" description="Basic and acidic residues" evidence="4">
    <location>
        <begin position="442"/>
        <end position="464"/>
    </location>
</feature>
<feature type="compositionally biased region" description="Basic and acidic residues" evidence="4">
    <location>
        <begin position="483"/>
        <end position="493"/>
    </location>
</feature>
<feature type="compositionally biased region" description="Basic and acidic residues" evidence="4">
    <location>
        <begin position="606"/>
        <end position="617"/>
    </location>
</feature>
<feature type="modified residue" description="Phosphoserine" evidence="2">
    <location>
        <position position="473"/>
    </location>
</feature>
<feature type="modified residue" description="Omega-N-methylarginine" evidence="2">
    <location>
        <position position="544"/>
    </location>
</feature>
<feature type="modified residue" description="Phosphoserine" evidence="2">
    <location>
        <position position="579"/>
    </location>
</feature>
<feature type="disulfide bond" evidence="1">
    <location>
        <begin position="42"/>
        <end position="145"/>
    </location>
</feature>
<feature type="sequence variant" id="VAR_049948" description="In dbSNP:rs33958744.">
    <original>V</original>
    <variation>I</variation>
    <location>
        <position position="202"/>
    </location>
</feature>
<accession>Q71H61</accession>
<protein>
    <recommendedName>
        <fullName evidence="6">Immunoglobulin-like domain-containing receptor 2</fullName>
    </recommendedName>
    <alternativeName>
        <fullName>Angulin-3</fullName>
    </alternativeName>
</protein>
<reference key="1">
    <citation type="submission" date="2002-04" db="EMBL/GenBank/DDBJ databases">
        <authorList>
            <person name="Schulz H.L."/>
            <person name="Stohr H."/>
            <person name="Weber B.H.F."/>
        </authorList>
    </citation>
    <scope>NUCLEOTIDE SEQUENCE [MRNA]</scope>
</reference>
<reference key="2">
    <citation type="journal article" date="2006" name="Nature">
        <title>The DNA sequence and biological annotation of human chromosome 1.</title>
        <authorList>
            <person name="Gregory S.G."/>
            <person name="Barlow K.F."/>
            <person name="McLay K.E."/>
            <person name="Kaul R."/>
            <person name="Swarbreck D."/>
            <person name="Dunham A."/>
            <person name="Scott C.E."/>
            <person name="Howe K.L."/>
            <person name="Woodfine K."/>
            <person name="Spencer C.C.A."/>
            <person name="Jones M.C."/>
            <person name="Gillson C."/>
            <person name="Searle S."/>
            <person name="Zhou Y."/>
            <person name="Kokocinski F."/>
            <person name="McDonald L."/>
            <person name="Evans R."/>
            <person name="Phillips K."/>
            <person name="Atkinson A."/>
            <person name="Cooper R."/>
            <person name="Jones C."/>
            <person name="Hall R.E."/>
            <person name="Andrews T.D."/>
            <person name="Lloyd C."/>
            <person name="Ainscough R."/>
            <person name="Almeida J.P."/>
            <person name="Ambrose K.D."/>
            <person name="Anderson F."/>
            <person name="Andrew R.W."/>
            <person name="Ashwell R.I.S."/>
            <person name="Aubin K."/>
            <person name="Babbage A.K."/>
            <person name="Bagguley C.L."/>
            <person name="Bailey J."/>
            <person name="Beasley H."/>
            <person name="Bethel G."/>
            <person name="Bird C.P."/>
            <person name="Bray-Allen S."/>
            <person name="Brown J.Y."/>
            <person name="Brown A.J."/>
            <person name="Buckley D."/>
            <person name="Burton J."/>
            <person name="Bye J."/>
            <person name="Carder C."/>
            <person name="Chapman J.C."/>
            <person name="Clark S.Y."/>
            <person name="Clarke G."/>
            <person name="Clee C."/>
            <person name="Cobley V."/>
            <person name="Collier R.E."/>
            <person name="Corby N."/>
            <person name="Coville G.J."/>
            <person name="Davies J."/>
            <person name="Deadman R."/>
            <person name="Dunn M."/>
            <person name="Earthrowl M."/>
            <person name="Ellington A.G."/>
            <person name="Errington H."/>
            <person name="Frankish A."/>
            <person name="Frankland J."/>
            <person name="French L."/>
            <person name="Garner P."/>
            <person name="Garnett J."/>
            <person name="Gay L."/>
            <person name="Ghori M.R.J."/>
            <person name="Gibson R."/>
            <person name="Gilby L.M."/>
            <person name="Gillett W."/>
            <person name="Glithero R.J."/>
            <person name="Grafham D.V."/>
            <person name="Griffiths C."/>
            <person name="Griffiths-Jones S."/>
            <person name="Grocock R."/>
            <person name="Hammond S."/>
            <person name="Harrison E.S.I."/>
            <person name="Hart E."/>
            <person name="Haugen E."/>
            <person name="Heath P.D."/>
            <person name="Holmes S."/>
            <person name="Holt K."/>
            <person name="Howden P.J."/>
            <person name="Hunt A.R."/>
            <person name="Hunt S.E."/>
            <person name="Hunter G."/>
            <person name="Isherwood J."/>
            <person name="James R."/>
            <person name="Johnson C."/>
            <person name="Johnson D."/>
            <person name="Joy A."/>
            <person name="Kay M."/>
            <person name="Kershaw J.K."/>
            <person name="Kibukawa M."/>
            <person name="Kimberley A.M."/>
            <person name="King A."/>
            <person name="Knights A.J."/>
            <person name="Lad H."/>
            <person name="Laird G."/>
            <person name="Lawlor S."/>
            <person name="Leongamornlert D.A."/>
            <person name="Lloyd D.M."/>
            <person name="Loveland J."/>
            <person name="Lovell J."/>
            <person name="Lush M.J."/>
            <person name="Lyne R."/>
            <person name="Martin S."/>
            <person name="Mashreghi-Mohammadi M."/>
            <person name="Matthews L."/>
            <person name="Matthews N.S.W."/>
            <person name="McLaren S."/>
            <person name="Milne S."/>
            <person name="Mistry S."/>
            <person name="Moore M.J.F."/>
            <person name="Nickerson T."/>
            <person name="O'Dell C.N."/>
            <person name="Oliver K."/>
            <person name="Palmeiri A."/>
            <person name="Palmer S.A."/>
            <person name="Parker A."/>
            <person name="Patel D."/>
            <person name="Pearce A.V."/>
            <person name="Peck A.I."/>
            <person name="Pelan S."/>
            <person name="Phelps K."/>
            <person name="Phillimore B.J."/>
            <person name="Plumb R."/>
            <person name="Rajan J."/>
            <person name="Raymond C."/>
            <person name="Rouse G."/>
            <person name="Saenphimmachak C."/>
            <person name="Sehra H.K."/>
            <person name="Sheridan E."/>
            <person name="Shownkeen R."/>
            <person name="Sims S."/>
            <person name="Skuce C.D."/>
            <person name="Smith M."/>
            <person name="Steward C."/>
            <person name="Subramanian S."/>
            <person name="Sycamore N."/>
            <person name="Tracey A."/>
            <person name="Tromans A."/>
            <person name="Van Helmond Z."/>
            <person name="Wall M."/>
            <person name="Wallis J.M."/>
            <person name="White S."/>
            <person name="Whitehead S.L."/>
            <person name="Wilkinson J.E."/>
            <person name="Willey D.L."/>
            <person name="Williams H."/>
            <person name="Wilming L."/>
            <person name="Wray P.W."/>
            <person name="Wu Z."/>
            <person name="Coulson A."/>
            <person name="Vaudin M."/>
            <person name="Sulston J.E."/>
            <person name="Durbin R.M."/>
            <person name="Hubbard T."/>
            <person name="Wooster R."/>
            <person name="Dunham I."/>
            <person name="Carter N.P."/>
            <person name="McVean G."/>
            <person name="Ross M.T."/>
            <person name="Harrow J."/>
            <person name="Olson M.V."/>
            <person name="Beck S."/>
            <person name="Rogers J."/>
            <person name="Bentley D.R."/>
        </authorList>
    </citation>
    <scope>NUCLEOTIDE SEQUENCE [LARGE SCALE GENOMIC DNA]</scope>
</reference>
<reference key="3">
    <citation type="journal article" date="2018" name="J. Immunol.">
        <title>ILDR2 Is a Novel B7-like Protein That Negatively Regulates T Cell Responses.</title>
        <authorList>
            <person name="Hecht I."/>
            <person name="Toporik A."/>
            <person name="Podojil J.R."/>
            <person name="Vaknin I."/>
            <person name="Cojocaru G."/>
            <person name="Oren A."/>
            <person name="Aizman E."/>
            <person name="Liang S.C."/>
            <person name="Leung L."/>
            <person name="Dicken Y."/>
            <person name="Novik A."/>
            <person name="Marbach-Bar N."/>
            <person name="Elmesmari A."/>
            <person name="Tange C."/>
            <person name="Gilmour A."/>
            <person name="McIntyre D."/>
            <person name="Kurowska-Stolarska M."/>
            <person name="McNamee K."/>
            <person name="Leitner J."/>
            <person name="Greenwald S."/>
            <person name="Dassa L."/>
            <person name="Levine Z."/>
            <person name="Steinberger P."/>
            <person name="Williams R.O."/>
            <person name="Miller S.D."/>
            <person name="McInnes I.B."/>
            <person name="Neria E."/>
            <person name="Rotman G."/>
        </authorList>
    </citation>
    <scope>FUNCTION</scope>
    <scope>TISSUE SPECIFICITY</scope>
    <scope>DEVELOPMENTAL STAGE</scope>
</reference>
<keyword id="KW-0965">Cell junction</keyword>
<keyword id="KW-1015">Disulfide bond</keyword>
<keyword id="KW-0256">Endoplasmic reticulum</keyword>
<keyword id="KW-0393">Immunoglobulin domain</keyword>
<keyword id="KW-0472">Membrane</keyword>
<keyword id="KW-0488">Methylation</keyword>
<keyword id="KW-0539">Nucleus</keyword>
<keyword id="KW-0597">Phosphoprotein</keyword>
<keyword id="KW-1267">Proteomics identification</keyword>
<keyword id="KW-1185">Reference proteome</keyword>
<keyword id="KW-0732">Signal</keyword>
<keyword id="KW-0796">Tight junction</keyword>
<keyword id="KW-0812">Transmembrane</keyword>
<keyword id="KW-1133">Transmembrane helix</keyword>
<dbReference type="EMBL" id="AF503509">
    <property type="protein sequence ID" value="AAQ07593.1"/>
    <property type="molecule type" value="mRNA"/>
</dbReference>
<dbReference type="EMBL" id="AL009182">
    <property type="status" value="NOT_ANNOTATED_CDS"/>
    <property type="molecule type" value="Genomic_DNA"/>
</dbReference>
<dbReference type="CCDS" id="CCDS1256.1"/>
<dbReference type="RefSeq" id="NP_955383.1">
    <property type="nucleotide sequence ID" value="NM_199351.3"/>
</dbReference>
<dbReference type="BioGRID" id="132364">
    <property type="interactions" value="54"/>
</dbReference>
<dbReference type="FunCoup" id="Q71H61">
    <property type="interactions" value="93"/>
</dbReference>
<dbReference type="IntAct" id="Q71H61">
    <property type="interactions" value="5"/>
</dbReference>
<dbReference type="MINT" id="Q71H61"/>
<dbReference type="STRING" id="9606.ENSP00000271417"/>
<dbReference type="GlyGen" id="Q71H61">
    <property type="glycosylation" value="1 site, 1 N-linked glycan (1 site)"/>
</dbReference>
<dbReference type="iPTMnet" id="Q71H61"/>
<dbReference type="PhosphoSitePlus" id="Q71H61"/>
<dbReference type="SwissPalm" id="Q71H61"/>
<dbReference type="BioMuta" id="ILDR2"/>
<dbReference type="DMDM" id="74749770"/>
<dbReference type="jPOST" id="Q71H61"/>
<dbReference type="MassIVE" id="Q71H61"/>
<dbReference type="PaxDb" id="9606-ENSP00000271417"/>
<dbReference type="PeptideAtlas" id="Q71H61"/>
<dbReference type="ProteomicsDB" id="68602"/>
<dbReference type="Antibodypedia" id="2487">
    <property type="antibodies" value="43 antibodies from 10 providers"/>
</dbReference>
<dbReference type="DNASU" id="387597"/>
<dbReference type="Ensembl" id="ENST00000271417.8">
    <property type="protein sequence ID" value="ENSP00000271417.2"/>
    <property type="gene ID" value="ENSG00000143195.13"/>
</dbReference>
<dbReference type="GeneID" id="387597"/>
<dbReference type="KEGG" id="hsa:387597"/>
<dbReference type="MANE-Select" id="ENST00000271417.8">
    <property type="protein sequence ID" value="ENSP00000271417.2"/>
    <property type="RefSeq nucleotide sequence ID" value="NM_199351.3"/>
    <property type="RefSeq protein sequence ID" value="NP_955383.1"/>
</dbReference>
<dbReference type="UCSC" id="uc001gdx.3">
    <property type="organism name" value="human"/>
</dbReference>
<dbReference type="AGR" id="HGNC:18131"/>
<dbReference type="CTD" id="387597"/>
<dbReference type="DisGeNET" id="387597"/>
<dbReference type="GeneCards" id="ILDR2"/>
<dbReference type="HGNC" id="HGNC:18131">
    <property type="gene designation" value="ILDR2"/>
</dbReference>
<dbReference type="HPA" id="ENSG00000143195">
    <property type="expression patterns" value="Tissue enhanced (brain, retina, testis)"/>
</dbReference>
<dbReference type="MIM" id="618081">
    <property type="type" value="gene"/>
</dbReference>
<dbReference type="neXtProt" id="NX_Q71H61"/>
<dbReference type="OpenTargets" id="ENSG00000143195"/>
<dbReference type="PharmGKB" id="PA164720916"/>
<dbReference type="VEuPathDB" id="HostDB:ENSG00000143195"/>
<dbReference type="eggNOG" id="ENOG502QSI2">
    <property type="taxonomic scope" value="Eukaryota"/>
</dbReference>
<dbReference type="GeneTree" id="ENSGT00950000183058"/>
<dbReference type="HOGENOM" id="CLU_028969_0_0_1"/>
<dbReference type="InParanoid" id="Q71H61"/>
<dbReference type="OMA" id="FRHXNDF"/>
<dbReference type="OrthoDB" id="9450321at2759"/>
<dbReference type="PAN-GO" id="Q71H61">
    <property type="GO annotations" value="2 GO annotations based on evolutionary models"/>
</dbReference>
<dbReference type="PhylomeDB" id="Q71H61"/>
<dbReference type="TreeFam" id="TF330877"/>
<dbReference type="PathwayCommons" id="Q71H61"/>
<dbReference type="SignaLink" id="Q71H61"/>
<dbReference type="BioGRID-ORCS" id="387597">
    <property type="hits" value="11 hits in 1142 CRISPR screens"/>
</dbReference>
<dbReference type="ChiTaRS" id="ILDR2">
    <property type="organism name" value="human"/>
</dbReference>
<dbReference type="GenomeRNAi" id="387597"/>
<dbReference type="Pharos" id="Q71H61">
    <property type="development level" value="Tdark"/>
</dbReference>
<dbReference type="PRO" id="PR:Q71H61"/>
<dbReference type="Proteomes" id="UP000005640">
    <property type="component" value="Chromosome 1"/>
</dbReference>
<dbReference type="RNAct" id="Q71H61">
    <property type="molecule type" value="protein"/>
</dbReference>
<dbReference type="Bgee" id="ENSG00000143195">
    <property type="expression patterns" value="Expressed in oocyte and 135 other cell types or tissues"/>
</dbReference>
<dbReference type="ExpressionAtlas" id="Q71H61">
    <property type="expression patterns" value="baseline and differential"/>
</dbReference>
<dbReference type="GO" id="GO:0005923">
    <property type="term" value="C:bicellular tight junction"/>
    <property type="evidence" value="ECO:0007669"/>
    <property type="project" value="UniProtKB-SubCell"/>
</dbReference>
<dbReference type="GO" id="GO:0005789">
    <property type="term" value="C:endoplasmic reticulum membrane"/>
    <property type="evidence" value="ECO:0007669"/>
    <property type="project" value="UniProtKB-SubCell"/>
</dbReference>
<dbReference type="GO" id="GO:0016020">
    <property type="term" value="C:membrane"/>
    <property type="evidence" value="ECO:0000318"/>
    <property type="project" value="GO_Central"/>
</dbReference>
<dbReference type="GO" id="GO:0005634">
    <property type="term" value="C:nucleus"/>
    <property type="evidence" value="ECO:0007669"/>
    <property type="project" value="UniProtKB-SubCell"/>
</dbReference>
<dbReference type="GO" id="GO:0070160">
    <property type="term" value="C:tight junction"/>
    <property type="evidence" value="ECO:0000250"/>
    <property type="project" value="UniProtKB"/>
</dbReference>
<dbReference type="GO" id="GO:0030154">
    <property type="term" value="P:cell differentiation"/>
    <property type="evidence" value="ECO:0007669"/>
    <property type="project" value="Ensembl"/>
</dbReference>
<dbReference type="GO" id="GO:0048873">
    <property type="term" value="P:homeostasis of number of cells within a tissue"/>
    <property type="evidence" value="ECO:0007669"/>
    <property type="project" value="Ensembl"/>
</dbReference>
<dbReference type="GO" id="GO:0030073">
    <property type="term" value="P:insulin secretion"/>
    <property type="evidence" value="ECO:0007669"/>
    <property type="project" value="Ensembl"/>
</dbReference>
<dbReference type="GO" id="GO:0050868">
    <property type="term" value="P:negative regulation of T cell activation"/>
    <property type="evidence" value="ECO:0000314"/>
    <property type="project" value="UniProtKB"/>
</dbReference>
<dbReference type="GO" id="GO:0031016">
    <property type="term" value="P:pancreas development"/>
    <property type="evidence" value="ECO:0007669"/>
    <property type="project" value="Ensembl"/>
</dbReference>
<dbReference type="GO" id="GO:0043484">
    <property type="term" value="P:regulation of RNA splicing"/>
    <property type="evidence" value="ECO:0000250"/>
    <property type="project" value="UniProtKB"/>
</dbReference>
<dbReference type="GO" id="GO:0009749">
    <property type="term" value="P:response to glucose"/>
    <property type="evidence" value="ECO:0007669"/>
    <property type="project" value="Ensembl"/>
</dbReference>
<dbReference type="Gene3D" id="2.60.40.10">
    <property type="entry name" value="Immunoglobulins"/>
    <property type="match status" value="1"/>
</dbReference>
<dbReference type="InterPro" id="IPR036179">
    <property type="entry name" value="Ig-like_dom_sf"/>
</dbReference>
<dbReference type="InterPro" id="IPR051874">
    <property type="entry name" value="Ig-like_domain-LISCH7"/>
</dbReference>
<dbReference type="InterPro" id="IPR013783">
    <property type="entry name" value="Ig-like_fold"/>
</dbReference>
<dbReference type="InterPro" id="IPR003599">
    <property type="entry name" value="Ig_sub"/>
</dbReference>
<dbReference type="InterPro" id="IPR008664">
    <property type="entry name" value="LISCH7"/>
</dbReference>
<dbReference type="PANTHER" id="PTHR15923:SF0">
    <property type="entry name" value="IMMUNOGLOBULIN-LIKE DOMAIN-CONTAINING RECEPTOR 2"/>
    <property type="match status" value="1"/>
</dbReference>
<dbReference type="PANTHER" id="PTHR15923">
    <property type="entry name" value="TRANSMEMBRANE AND IMMUNOGLOBULIN DOMAIN-CONTAINING PROTEIN"/>
    <property type="match status" value="1"/>
</dbReference>
<dbReference type="Pfam" id="PF05624">
    <property type="entry name" value="LSR"/>
    <property type="match status" value="1"/>
</dbReference>
<dbReference type="SMART" id="SM00409">
    <property type="entry name" value="IG"/>
    <property type="match status" value="1"/>
</dbReference>
<dbReference type="SUPFAM" id="SSF48726">
    <property type="entry name" value="Immunoglobulin"/>
    <property type="match status" value="1"/>
</dbReference>